<proteinExistence type="evidence at transcript level"/>
<evidence type="ECO:0000255" key="1">
    <source>
        <dbReference type="PROSITE-ProRule" id="PRU00036"/>
    </source>
</evidence>
<evidence type="ECO:0000256" key="2">
    <source>
        <dbReference type="SAM" id="MobiDB-lite"/>
    </source>
</evidence>
<gene>
    <name type="primary">bsdc1-b</name>
</gene>
<name>BSC1B_XENLA</name>
<organism>
    <name type="scientific">Xenopus laevis</name>
    <name type="common">African clawed frog</name>
    <dbReference type="NCBI Taxonomy" id="8355"/>
    <lineage>
        <taxon>Eukaryota</taxon>
        <taxon>Metazoa</taxon>
        <taxon>Chordata</taxon>
        <taxon>Craniata</taxon>
        <taxon>Vertebrata</taxon>
        <taxon>Euteleostomi</taxon>
        <taxon>Amphibia</taxon>
        <taxon>Batrachia</taxon>
        <taxon>Anura</taxon>
        <taxon>Pipoidea</taxon>
        <taxon>Pipidae</taxon>
        <taxon>Xenopodinae</taxon>
        <taxon>Xenopus</taxon>
        <taxon>Xenopus</taxon>
    </lineage>
</organism>
<feature type="chain" id="PRO_0000282644" description="BSD domain-containing protein 1-B">
    <location>
        <begin position="1"/>
        <end position="417"/>
    </location>
</feature>
<feature type="domain" description="BSD" evidence="1">
    <location>
        <begin position="153"/>
        <end position="205"/>
    </location>
</feature>
<feature type="region of interest" description="Disordered" evidence="2">
    <location>
        <begin position="215"/>
        <end position="234"/>
    </location>
</feature>
<feature type="region of interest" description="Disordered" evidence="2">
    <location>
        <begin position="262"/>
        <end position="292"/>
    </location>
</feature>
<feature type="region of interest" description="Disordered" evidence="2">
    <location>
        <begin position="323"/>
        <end position="390"/>
    </location>
</feature>
<feature type="compositionally biased region" description="Basic and acidic residues" evidence="2">
    <location>
        <begin position="262"/>
        <end position="278"/>
    </location>
</feature>
<feature type="compositionally biased region" description="Low complexity" evidence="2">
    <location>
        <begin position="281"/>
        <end position="292"/>
    </location>
</feature>
<feature type="compositionally biased region" description="Polar residues" evidence="2">
    <location>
        <begin position="332"/>
        <end position="343"/>
    </location>
</feature>
<feature type="compositionally biased region" description="Basic and acidic residues" evidence="2">
    <location>
        <begin position="345"/>
        <end position="356"/>
    </location>
</feature>
<feature type="compositionally biased region" description="Polar residues" evidence="2">
    <location>
        <begin position="360"/>
        <end position="379"/>
    </location>
</feature>
<feature type="compositionally biased region" description="Acidic residues" evidence="2">
    <location>
        <begin position="380"/>
        <end position="390"/>
    </location>
</feature>
<keyword id="KW-1185">Reference proteome</keyword>
<protein>
    <recommendedName>
        <fullName>BSD domain-containing protein 1-B</fullName>
    </recommendedName>
</protein>
<reference key="1">
    <citation type="submission" date="2004-04" db="EMBL/GenBank/DDBJ databases">
        <authorList>
            <consortium name="NIH - Xenopus Gene Collection (XGC) project"/>
        </authorList>
    </citation>
    <scope>NUCLEOTIDE SEQUENCE [LARGE SCALE MRNA]</scope>
    <source>
        <tissue>Embryo</tissue>
    </source>
</reference>
<accession>Q6NTW1</accession>
<sequence length="417" mass="46472">MAEGSYGFLCREDGSWWRSWLQQSYTSVRDKSAEALEFMKRDLNEFTRVVQHDTACTIAATASVVKEKLVVEGSSGTTEKVKKGLSDFLGVISDTFAPSPDKTIDCDVITLMATPSGTTELYDSTKARLYSLQSDPATYCNEPDGSPAEFDAWLAYWDPEQRKAEISEPLVTSPSIRALFTKMVPAAVSHSEFWQRYFYKVHQLEQEEARRDALKQRANQSVHSEEPKWEEEEEDFVGAALTPALKLKEKCVISPPTIPTLHVEDKSEKTAELNRDHTSVTSPSESSESISPITQIANPEYIEQTSSKDPSLCTLTVTKEKIAAETDKSSAPVEQTGKSNAQMGTHREDPPSDLRVFELNSDSGKSTPSNNGQKGSSTDVSEDWEKDFDMTEEEVQMALSGVEVSGEVEDEDWENWE</sequence>
<dbReference type="EMBL" id="BC068843">
    <property type="protein sequence ID" value="AAH68843.1"/>
    <property type="molecule type" value="mRNA"/>
</dbReference>
<dbReference type="RefSeq" id="NP_001084721.1">
    <property type="nucleotide sequence ID" value="NM_001091252.1"/>
</dbReference>
<dbReference type="SMR" id="Q6NTW1"/>
<dbReference type="DNASU" id="414685"/>
<dbReference type="GeneID" id="414685"/>
<dbReference type="KEGG" id="xla:414685"/>
<dbReference type="AGR" id="Xenbase:XB-GENE-6252275"/>
<dbReference type="CTD" id="414685"/>
<dbReference type="Xenbase" id="XB-GENE-6252275">
    <property type="gene designation" value="bsdc1.S"/>
</dbReference>
<dbReference type="OrthoDB" id="73788at2759"/>
<dbReference type="Proteomes" id="UP000186698">
    <property type="component" value="Chromosome 2S"/>
</dbReference>
<dbReference type="Bgee" id="414685">
    <property type="expression patterns" value="Expressed in pancreas and 19 other cell types or tissues"/>
</dbReference>
<dbReference type="GO" id="GO:0005737">
    <property type="term" value="C:cytoplasm"/>
    <property type="evidence" value="ECO:0000318"/>
    <property type="project" value="GO_Central"/>
</dbReference>
<dbReference type="Gene3D" id="1.10.3970.10">
    <property type="entry name" value="BSD domain"/>
    <property type="match status" value="1"/>
</dbReference>
<dbReference type="InterPro" id="IPR005607">
    <property type="entry name" value="BSD_dom"/>
</dbReference>
<dbReference type="InterPro" id="IPR035925">
    <property type="entry name" value="BSD_dom_sf"/>
</dbReference>
<dbReference type="InterPro" id="IPR051494">
    <property type="entry name" value="BSD_domain-containing"/>
</dbReference>
<dbReference type="PANTHER" id="PTHR16019:SF5">
    <property type="entry name" value="BSD DOMAIN-CONTAINING PROTEIN 1"/>
    <property type="match status" value="1"/>
</dbReference>
<dbReference type="PANTHER" id="PTHR16019">
    <property type="entry name" value="SYNAPSE-ASSOCIATED PROTEIN"/>
    <property type="match status" value="1"/>
</dbReference>
<dbReference type="Pfam" id="PF03909">
    <property type="entry name" value="BSD"/>
    <property type="match status" value="1"/>
</dbReference>
<dbReference type="SMART" id="SM00751">
    <property type="entry name" value="BSD"/>
    <property type="match status" value="1"/>
</dbReference>
<dbReference type="SUPFAM" id="SSF140383">
    <property type="entry name" value="BSD domain-like"/>
    <property type="match status" value="1"/>
</dbReference>
<dbReference type="PROSITE" id="PS50858">
    <property type="entry name" value="BSD"/>
    <property type="match status" value="1"/>
</dbReference>